<evidence type="ECO:0000250" key="1"/>
<evidence type="ECO:0000250" key="2">
    <source>
        <dbReference type="UniProtKB" id="P22226"/>
    </source>
</evidence>
<evidence type="ECO:0000255" key="3"/>
<evidence type="ECO:0000305" key="4"/>
<proteinExistence type="evidence at transcript level"/>
<feature type="signal peptide" evidence="3">
    <location>
        <begin position="1"/>
        <end position="29"/>
    </location>
</feature>
<feature type="propeptide" id="PRO_0000004698" evidence="1">
    <location>
        <begin position="30"/>
        <end position="143"/>
    </location>
</feature>
<feature type="peptide" id="PRO_0000004699" description="Cathelicidin-1">
    <location>
        <begin position="144"/>
        <end position="155"/>
    </location>
</feature>
<feature type="modified residue" description="Pyrrolidone carboxylic acid" evidence="2">
    <location>
        <position position="30"/>
    </location>
</feature>
<feature type="disulfide bond" evidence="1">
    <location>
        <begin position="85"/>
        <end position="96"/>
    </location>
</feature>
<feature type="disulfide bond" evidence="1">
    <location>
        <begin position="107"/>
        <end position="124"/>
    </location>
</feature>
<feature type="disulfide bond" evidence="1">
    <location>
        <begin position="146"/>
        <end position="154"/>
    </location>
</feature>
<name>CTHL1_SHEEP</name>
<reference key="1">
    <citation type="journal article" date="1995" name="FEBS Lett.">
        <title>cDNA sequences of three sheep myeloid cathelicidins.</title>
        <authorList>
            <person name="Bagella L."/>
            <person name="Scocchi M."/>
            <person name="Zanetti M."/>
        </authorList>
    </citation>
    <scope>NUCLEOTIDE SEQUENCE [MRNA]</scope>
    <source>
        <tissue>Bone marrow</tissue>
    </source>
</reference>
<reference key="2">
    <citation type="journal article" date="1998" name="Gene">
        <title>Localization and genomic organization of sheep antimicrobial peptides genes.</title>
        <authorList>
            <person name="Huttner K.M."/>
            <person name="Lambeth M.R."/>
            <person name="Burkin H.R."/>
            <person name="Broad T.E."/>
        </authorList>
    </citation>
    <scope>NUCLEOTIDE SEQUENCE [GENOMIC DNA]</scope>
    <source>
        <tissue>Liver</tissue>
    </source>
</reference>
<gene>
    <name type="primary">CATHL1A</name>
    <name type="synonym">BAC1A</name>
    <name type="synonym">DODEA</name>
</gene>
<gene>
    <name type="primary">CATHL1B</name>
    <name type="synonym">BAC1B</name>
    <name type="synonym">DODEB</name>
</gene>
<comment type="function">
    <text evidence="1">Potent microbicidal activity; active against S.aureus and E.coli.</text>
</comment>
<comment type="subcellular location">
    <subcellularLocation>
        <location>Secreted</location>
    </subcellularLocation>
</comment>
<comment type="similarity">
    <text evidence="4">Belongs to the cathelicidin family.</text>
</comment>
<organism>
    <name type="scientific">Ovis aries</name>
    <name type="common">Sheep</name>
    <dbReference type="NCBI Taxonomy" id="9940"/>
    <lineage>
        <taxon>Eukaryota</taxon>
        <taxon>Metazoa</taxon>
        <taxon>Chordata</taxon>
        <taxon>Craniata</taxon>
        <taxon>Vertebrata</taxon>
        <taxon>Euteleostomi</taxon>
        <taxon>Mammalia</taxon>
        <taxon>Eutheria</taxon>
        <taxon>Laurasiatheria</taxon>
        <taxon>Artiodactyla</taxon>
        <taxon>Ruminantia</taxon>
        <taxon>Pecora</taxon>
        <taxon>Bovidae</taxon>
        <taxon>Caprinae</taxon>
        <taxon>Ovis</taxon>
    </lineage>
</organism>
<accession>P54230</accession>
<dbReference type="EMBL" id="L46853">
    <property type="protein sequence ID" value="AAA85469.1"/>
    <property type="molecule type" value="mRNA"/>
</dbReference>
<dbReference type="EMBL" id="U60595">
    <property type="protein sequence ID" value="AAB49710.1"/>
    <property type="molecule type" value="Genomic_DNA"/>
</dbReference>
<dbReference type="EMBL" id="U60596">
    <property type="protein sequence ID" value="AAB49711.1"/>
    <property type="molecule type" value="Genomic_DNA"/>
</dbReference>
<dbReference type="PIR" id="S68229">
    <property type="entry name" value="S68229"/>
</dbReference>
<dbReference type="RefSeq" id="NP_001009772.1">
    <property type="nucleotide sequence ID" value="NM_001009772.1"/>
</dbReference>
<dbReference type="SMR" id="P54230"/>
<dbReference type="STRING" id="9940.ENSOARP00000001457"/>
<dbReference type="PaxDb" id="9940-ENSOARP00000001457"/>
<dbReference type="Ensembl" id="ENSOART00225066377">
    <property type="protein sequence ID" value="ENSOARP00225033417"/>
    <property type="gene ID" value="ENSOARG00225040102"/>
</dbReference>
<dbReference type="Ensembl" id="ENSOART00225066388">
    <property type="protein sequence ID" value="ENSOARP00225033421"/>
    <property type="gene ID" value="ENSOARG00225040105"/>
</dbReference>
<dbReference type="GeneID" id="443312"/>
<dbReference type="KEGG" id="oas:443312"/>
<dbReference type="CTD" id="443312"/>
<dbReference type="eggNOG" id="ENOG502SAES">
    <property type="taxonomic scope" value="Eukaryota"/>
</dbReference>
<dbReference type="OrthoDB" id="9714232at2759"/>
<dbReference type="Proteomes" id="UP000002356">
    <property type="component" value="Unplaced"/>
</dbReference>
<dbReference type="GO" id="GO:0005615">
    <property type="term" value="C:extracellular space"/>
    <property type="evidence" value="ECO:0007669"/>
    <property type="project" value="TreeGrafter"/>
</dbReference>
<dbReference type="GO" id="GO:0001530">
    <property type="term" value="F:lipopolysaccharide binding"/>
    <property type="evidence" value="ECO:0007669"/>
    <property type="project" value="TreeGrafter"/>
</dbReference>
<dbReference type="GO" id="GO:0061844">
    <property type="term" value="P:antimicrobial humoral immune response mediated by antimicrobial peptide"/>
    <property type="evidence" value="ECO:0007669"/>
    <property type="project" value="TreeGrafter"/>
</dbReference>
<dbReference type="GO" id="GO:0050829">
    <property type="term" value="P:defense response to Gram-negative bacterium"/>
    <property type="evidence" value="ECO:0007669"/>
    <property type="project" value="TreeGrafter"/>
</dbReference>
<dbReference type="GO" id="GO:0050830">
    <property type="term" value="P:defense response to Gram-positive bacterium"/>
    <property type="evidence" value="ECO:0007669"/>
    <property type="project" value="TreeGrafter"/>
</dbReference>
<dbReference type="GO" id="GO:0045087">
    <property type="term" value="P:innate immune response"/>
    <property type="evidence" value="ECO:0007669"/>
    <property type="project" value="TreeGrafter"/>
</dbReference>
<dbReference type="FunFam" id="3.10.450.10:FF:000003">
    <property type="entry name" value="Cathelicidin antimicrobial peptide"/>
    <property type="match status" value="1"/>
</dbReference>
<dbReference type="Gene3D" id="3.10.450.10">
    <property type="match status" value="1"/>
</dbReference>
<dbReference type="InterPro" id="IPR001894">
    <property type="entry name" value="Cathelicidin-like"/>
</dbReference>
<dbReference type="InterPro" id="IPR018216">
    <property type="entry name" value="Cathelicidin_CS"/>
</dbReference>
<dbReference type="InterPro" id="IPR046350">
    <property type="entry name" value="Cystatin_sf"/>
</dbReference>
<dbReference type="PANTHER" id="PTHR10206">
    <property type="entry name" value="CATHELICIDIN"/>
    <property type="match status" value="1"/>
</dbReference>
<dbReference type="PANTHER" id="PTHR10206:SF2">
    <property type="entry name" value="CATHELICIDIN ANTIMICROBIAL PEPTIDE"/>
    <property type="match status" value="1"/>
</dbReference>
<dbReference type="Pfam" id="PF00666">
    <property type="entry name" value="Cathelicidins"/>
    <property type="match status" value="1"/>
</dbReference>
<dbReference type="SUPFAM" id="SSF54403">
    <property type="entry name" value="Cystatin/monellin"/>
    <property type="match status" value="1"/>
</dbReference>
<dbReference type="PROSITE" id="PS00946">
    <property type="entry name" value="CATHELICIDINS_1"/>
    <property type="match status" value="1"/>
</dbReference>
<dbReference type="PROSITE" id="PS00947">
    <property type="entry name" value="CATHELICIDINS_2"/>
    <property type="match status" value="1"/>
</dbReference>
<sequence length="155" mass="17648">METQRASLSLGRCSLWLLLLGLALPSASAQVLSYREAVLRAVDQLNEQSSEPNIYRLLELDQPPQDDEDPDSPKRVSFRVKETVCPRTTQQPPEQCDFKENGLLKRCEGTVTLDQVRGNFDITCNNHQSIRITKQPWAPPQAARICRIIFLRVCR</sequence>
<keyword id="KW-0044">Antibiotic</keyword>
<keyword id="KW-0929">Antimicrobial</keyword>
<keyword id="KW-1015">Disulfide bond</keyword>
<keyword id="KW-0873">Pyrrolidone carboxylic acid</keyword>
<keyword id="KW-1185">Reference proteome</keyword>
<keyword id="KW-0964">Secreted</keyword>
<keyword id="KW-0732">Signal</keyword>
<protein>
    <recommendedName>
        <fullName>Cathelicidin-1</fullName>
    </recommendedName>
    <alternativeName>
        <fullName>Bactenecin-1</fullName>
        <shortName>Bac1</shortName>
    </alternativeName>
    <alternativeName>
        <fullName>Cyclic dodecapeptide</fullName>
    </alternativeName>
</protein>